<proteinExistence type="evidence at protein level"/>
<dbReference type="EMBL" id="U08215">
    <property type="protein sequence ID" value="AAA17724.1"/>
    <property type="molecule type" value="mRNA"/>
</dbReference>
<dbReference type="EMBL" id="AK145937">
    <property type="protein sequence ID" value="BAE26767.1"/>
    <property type="molecule type" value="mRNA"/>
</dbReference>
<dbReference type="EMBL" id="AK153397">
    <property type="protein sequence ID" value="BAE31959.1"/>
    <property type="molecule type" value="mRNA"/>
</dbReference>
<dbReference type="EMBL" id="AL732620">
    <property type="status" value="NOT_ANNOTATED_CDS"/>
    <property type="molecule type" value="Genomic_DNA"/>
</dbReference>
<dbReference type="EMBL" id="BC002056">
    <property type="protein sequence ID" value="AAH02056.1"/>
    <property type="molecule type" value="mRNA"/>
</dbReference>
<dbReference type="CCDS" id="CCDS15653.1">
    <molecule id="Q99M31-1"/>
</dbReference>
<dbReference type="RefSeq" id="NP_056580.2">
    <molecule id="Q99M31-1"/>
    <property type="nucleotide sequence ID" value="NM_015765.2"/>
</dbReference>
<dbReference type="SMR" id="Q99M31"/>
<dbReference type="BioGRID" id="206043">
    <property type="interactions" value="9"/>
</dbReference>
<dbReference type="FunCoup" id="Q99M31">
    <property type="interactions" value="3332"/>
</dbReference>
<dbReference type="IntAct" id="Q99M31">
    <property type="interactions" value="11"/>
</dbReference>
<dbReference type="MINT" id="Q99M31"/>
<dbReference type="STRING" id="10090.ENSMUSP00000027961"/>
<dbReference type="GlyGen" id="Q99M31">
    <property type="glycosylation" value="1 site, 1 O-linked glycan (1 site)"/>
</dbReference>
<dbReference type="iPTMnet" id="Q99M31"/>
<dbReference type="PhosphoSitePlus" id="Q99M31"/>
<dbReference type="SwissPalm" id="Q99M31"/>
<dbReference type="PaxDb" id="10090-ENSMUSP00000027961"/>
<dbReference type="PeptideAtlas" id="Q99M31"/>
<dbReference type="ProteomicsDB" id="267068">
    <molecule id="Q99M31-1"/>
</dbReference>
<dbReference type="ProteomicsDB" id="267069">
    <molecule id="Q99M31-2"/>
</dbReference>
<dbReference type="Pumba" id="Q99M31"/>
<dbReference type="Antibodypedia" id="37843">
    <property type="antibodies" value="148 antibodies from 28 providers"/>
</dbReference>
<dbReference type="DNASU" id="50497"/>
<dbReference type="Ensembl" id="ENSMUST00000027961.12">
    <molecule id="Q99M31-1"/>
    <property type="protein sequence ID" value="ENSMUSP00000027961.6"/>
    <property type="gene ID" value="ENSMUSG00000109865.2"/>
</dbReference>
<dbReference type="GeneID" id="50497"/>
<dbReference type="KEGG" id="mmu:50497"/>
<dbReference type="UCSC" id="uc008ief.1">
    <molecule id="Q99M31-1"/>
    <property type="organism name" value="mouse"/>
</dbReference>
<dbReference type="UCSC" id="uc008ieg.1">
    <molecule id="Q99M31-2"/>
    <property type="organism name" value="mouse"/>
</dbReference>
<dbReference type="AGR" id="MGI:1354164"/>
<dbReference type="CTD" id="51182"/>
<dbReference type="MGI" id="MGI:1354164">
    <property type="gene designation" value="Hspa14"/>
</dbReference>
<dbReference type="VEuPathDB" id="HostDB:ENSMUSG00000109865"/>
<dbReference type="eggNOG" id="KOG0101">
    <property type="taxonomic scope" value="Eukaryota"/>
</dbReference>
<dbReference type="GeneTree" id="ENSGT00940000156380"/>
<dbReference type="HOGENOM" id="CLU_005965_0_3_1"/>
<dbReference type="InParanoid" id="Q99M31"/>
<dbReference type="OMA" id="DQVLMDH"/>
<dbReference type="OrthoDB" id="29851at2759"/>
<dbReference type="PhylomeDB" id="Q99M31"/>
<dbReference type="TreeFam" id="TF105045"/>
<dbReference type="Reactome" id="R-MMU-3371453">
    <property type="pathway name" value="Regulation of HSF1-mediated heat shock response"/>
</dbReference>
<dbReference type="BioGRID-ORCS" id="50497">
    <property type="hits" value="21 hits in 80 CRISPR screens"/>
</dbReference>
<dbReference type="PRO" id="PR:Q99M31"/>
<dbReference type="Proteomes" id="UP000000589">
    <property type="component" value="Chromosome 2"/>
</dbReference>
<dbReference type="RNAct" id="Q99M31">
    <property type="molecule type" value="protein"/>
</dbReference>
<dbReference type="Bgee" id="ENSMUSG00000109865">
    <property type="expression patterns" value="Expressed in ectoplacental cone and 265 other cell types or tissues"/>
</dbReference>
<dbReference type="GO" id="GO:0005829">
    <property type="term" value="C:cytosol"/>
    <property type="evidence" value="ECO:0000250"/>
    <property type="project" value="UniProtKB"/>
</dbReference>
<dbReference type="GO" id="GO:0005840">
    <property type="term" value="C:ribosome"/>
    <property type="evidence" value="ECO:0007669"/>
    <property type="project" value="Ensembl"/>
</dbReference>
<dbReference type="GO" id="GO:0005524">
    <property type="term" value="F:ATP binding"/>
    <property type="evidence" value="ECO:0007669"/>
    <property type="project" value="UniProtKB-KW"/>
</dbReference>
<dbReference type="GO" id="GO:0140662">
    <property type="term" value="F:ATP-dependent protein folding chaperone"/>
    <property type="evidence" value="ECO:0007669"/>
    <property type="project" value="InterPro"/>
</dbReference>
<dbReference type="CDD" id="cd10238">
    <property type="entry name" value="ASKHA_NBD_HSP70_HSPA14"/>
    <property type="match status" value="1"/>
</dbReference>
<dbReference type="FunFam" id="2.60.34.10:FF:000013">
    <property type="entry name" value="Heat shock 70 kDa protein 14"/>
    <property type="match status" value="1"/>
</dbReference>
<dbReference type="FunFam" id="3.30.30.30:FF:000008">
    <property type="entry name" value="heat shock 70 kDa protein 14"/>
    <property type="match status" value="1"/>
</dbReference>
<dbReference type="FunFam" id="3.90.640.10:FF:000010">
    <property type="entry name" value="heat shock 70 kDa protein 14"/>
    <property type="match status" value="1"/>
</dbReference>
<dbReference type="FunFam" id="3.30.420.40:FF:000171">
    <property type="entry name" value="Heat shock 70 kDa protein 4"/>
    <property type="match status" value="1"/>
</dbReference>
<dbReference type="FunFam" id="3.30.420.40:FF:000433">
    <property type="entry name" value="Heat shock protein family A (Hsp70) member 14"/>
    <property type="match status" value="1"/>
</dbReference>
<dbReference type="Gene3D" id="3.30.30.30">
    <property type="match status" value="1"/>
</dbReference>
<dbReference type="Gene3D" id="3.30.420.40">
    <property type="match status" value="2"/>
</dbReference>
<dbReference type="Gene3D" id="3.90.640.10">
    <property type="entry name" value="Actin, Chain A, domain 4"/>
    <property type="match status" value="1"/>
</dbReference>
<dbReference type="Gene3D" id="2.60.34.10">
    <property type="entry name" value="Substrate Binding Domain Of DNAk, Chain A, domain 1"/>
    <property type="match status" value="1"/>
</dbReference>
<dbReference type="InterPro" id="IPR043129">
    <property type="entry name" value="ATPase_NBD"/>
</dbReference>
<dbReference type="InterPro" id="IPR018181">
    <property type="entry name" value="Heat_shock_70_CS"/>
</dbReference>
<dbReference type="InterPro" id="IPR029047">
    <property type="entry name" value="HSP70_peptide-bd_sf"/>
</dbReference>
<dbReference type="InterPro" id="IPR013126">
    <property type="entry name" value="Hsp_70_fam"/>
</dbReference>
<dbReference type="InterPro" id="IPR042049">
    <property type="entry name" value="HSPA14_NBD"/>
</dbReference>
<dbReference type="PANTHER" id="PTHR19375">
    <property type="entry name" value="HEAT SHOCK PROTEIN 70KDA"/>
    <property type="match status" value="1"/>
</dbReference>
<dbReference type="Pfam" id="PF00012">
    <property type="entry name" value="HSP70"/>
    <property type="match status" value="1"/>
</dbReference>
<dbReference type="PRINTS" id="PR00301">
    <property type="entry name" value="HEATSHOCK70"/>
</dbReference>
<dbReference type="SUPFAM" id="SSF53067">
    <property type="entry name" value="Actin-like ATPase domain"/>
    <property type="match status" value="2"/>
</dbReference>
<dbReference type="SUPFAM" id="SSF100920">
    <property type="entry name" value="Heat shock protein 70kD (HSP70), peptide-binding domain"/>
    <property type="match status" value="1"/>
</dbReference>
<dbReference type="PROSITE" id="PS01036">
    <property type="entry name" value="HSP70_3"/>
    <property type="match status" value="1"/>
</dbReference>
<accession>Q99M31</accession>
<accession>A2AJH7</accession>
<accession>Q3U5W7</accession>
<accession>Q60637</accession>
<name>HSP7E_MOUSE</name>
<protein>
    <recommendedName>
        <fullName>Heat shock 70 kDa protein 14</fullName>
    </recommendedName>
    <alternativeName>
        <fullName>NST-1</fullName>
    </alternativeName>
    <alternativeName>
        <fullName>hsr.1</fullName>
    </alternativeName>
</protein>
<reference key="1">
    <citation type="thesis" date="1994" institute="Rockefeller University" country="United States">
        <title>The molecular cloning and characterization of NST-1 (hsr.1), a novel member of the Hsp70 superfamily.</title>
        <authorList>
            <person name="Yang C."/>
        </authorList>
    </citation>
    <scope>NUCLEOTIDE SEQUENCE [MRNA] (ISOFORM 1)</scope>
    <source>
        <tissue>Brain</tissue>
    </source>
</reference>
<reference key="2">
    <citation type="journal article" date="2005" name="Science">
        <title>The transcriptional landscape of the mammalian genome.</title>
        <authorList>
            <person name="Carninci P."/>
            <person name="Kasukawa T."/>
            <person name="Katayama S."/>
            <person name="Gough J."/>
            <person name="Frith M.C."/>
            <person name="Maeda N."/>
            <person name="Oyama R."/>
            <person name="Ravasi T."/>
            <person name="Lenhard B."/>
            <person name="Wells C."/>
            <person name="Kodzius R."/>
            <person name="Shimokawa K."/>
            <person name="Bajic V.B."/>
            <person name="Brenner S.E."/>
            <person name="Batalov S."/>
            <person name="Forrest A.R."/>
            <person name="Zavolan M."/>
            <person name="Davis M.J."/>
            <person name="Wilming L.G."/>
            <person name="Aidinis V."/>
            <person name="Allen J.E."/>
            <person name="Ambesi-Impiombato A."/>
            <person name="Apweiler R."/>
            <person name="Aturaliya R.N."/>
            <person name="Bailey T.L."/>
            <person name="Bansal M."/>
            <person name="Baxter L."/>
            <person name="Beisel K.W."/>
            <person name="Bersano T."/>
            <person name="Bono H."/>
            <person name="Chalk A.M."/>
            <person name="Chiu K.P."/>
            <person name="Choudhary V."/>
            <person name="Christoffels A."/>
            <person name="Clutterbuck D.R."/>
            <person name="Crowe M.L."/>
            <person name="Dalla E."/>
            <person name="Dalrymple B.P."/>
            <person name="de Bono B."/>
            <person name="Della Gatta G."/>
            <person name="di Bernardo D."/>
            <person name="Down T."/>
            <person name="Engstrom P."/>
            <person name="Fagiolini M."/>
            <person name="Faulkner G."/>
            <person name="Fletcher C.F."/>
            <person name="Fukushima T."/>
            <person name="Furuno M."/>
            <person name="Futaki S."/>
            <person name="Gariboldi M."/>
            <person name="Georgii-Hemming P."/>
            <person name="Gingeras T.R."/>
            <person name="Gojobori T."/>
            <person name="Green R.E."/>
            <person name="Gustincich S."/>
            <person name="Harbers M."/>
            <person name="Hayashi Y."/>
            <person name="Hensch T.K."/>
            <person name="Hirokawa N."/>
            <person name="Hill D."/>
            <person name="Huminiecki L."/>
            <person name="Iacono M."/>
            <person name="Ikeo K."/>
            <person name="Iwama A."/>
            <person name="Ishikawa T."/>
            <person name="Jakt M."/>
            <person name="Kanapin A."/>
            <person name="Katoh M."/>
            <person name="Kawasawa Y."/>
            <person name="Kelso J."/>
            <person name="Kitamura H."/>
            <person name="Kitano H."/>
            <person name="Kollias G."/>
            <person name="Krishnan S.P."/>
            <person name="Kruger A."/>
            <person name="Kummerfeld S.K."/>
            <person name="Kurochkin I.V."/>
            <person name="Lareau L.F."/>
            <person name="Lazarevic D."/>
            <person name="Lipovich L."/>
            <person name="Liu J."/>
            <person name="Liuni S."/>
            <person name="McWilliam S."/>
            <person name="Madan Babu M."/>
            <person name="Madera M."/>
            <person name="Marchionni L."/>
            <person name="Matsuda H."/>
            <person name="Matsuzawa S."/>
            <person name="Miki H."/>
            <person name="Mignone F."/>
            <person name="Miyake S."/>
            <person name="Morris K."/>
            <person name="Mottagui-Tabar S."/>
            <person name="Mulder N."/>
            <person name="Nakano N."/>
            <person name="Nakauchi H."/>
            <person name="Ng P."/>
            <person name="Nilsson R."/>
            <person name="Nishiguchi S."/>
            <person name="Nishikawa S."/>
            <person name="Nori F."/>
            <person name="Ohara O."/>
            <person name="Okazaki Y."/>
            <person name="Orlando V."/>
            <person name="Pang K.C."/>
            <person name="Pavan W.J."/>
            <person name="Pavesi G."/>
            <person name="Pesole G."/>
            <person name="Petrovsky N."/>
            <person name="Piazza S."/>
            <person name="Reed J."/>
            <person name="Reid J.F."/>
            <person name="Ring B.Z."/>
            <person name="Ringwald M."/>
            <person name="Rost B."/>
            <person name="Ruan Y."/>
            <person name="Salzberg S.L."/>
            <person name="Sandelin A."/>
            <person name="Schneider C."/>
            <person name="Schoenbach C."/>
            <person name="Sekiguchi K."/>
            <person name="Semple C.A."/>
            <person name="Seno S."/>
            <person name="Sessa L."/>
            <person name="Sheng Y."/>
            <person name="Shibata Y."/>
            <person name="Shimada H."/>
            <person name="Shimada K."/>
            <person name="Silva D."/>
            <person name="Sinclair B."/>
            <person name="Sperling S."/>
            <person name="Stupka E."/>
            <person name="Sugiura K."/>
            <person name="Sultana R."/>
            <person name="Takenaka Y."/>
            <person name="Taki K."/>
            <person name="Tammoja K."/>
            <person name="Tan S.L."/>
            <person name="Tang S."/>
            <person name="Taylor M.S."/>
            <person name="Tegner J."/>
            <person name="Teichmann S.A."/>
            <person name="Ueda H.R."/>
            <person name="van Nimwegen E."/>
            <person name="Verardo R."/>
            <person name="Wei C.L."/>
            <person name="Yagi K."/>
            <person name="Yamanishi H."/>
            <person name="Zabarovsky E."/>
            <person name="Zhu S."/>
            <person name="Zimmer A."/>
            <person name="Hide W."/>
            <person name="Bult C."/>
            <person name="Grimmond S.M."/>
            <person name="Teasdale R.D."/>
            <person name="Liu E.T."/>
            <person name="Brusic V."/>
            <person name="Quackenbush J."/>
            <person name="Wahlestedt C."/>
            <person name="Mattick J.S."/>
            <person name="Hume D.A."/>
            <person name="Kai C."/>
            <person name="Sasaki D."/>
            <person name="Tomaru Y."/>
            <person name="Fukuda S."/>
            <person name="Kanamori-Katayama M."/>
            <person name="Suzuki M."/>
            <person name="Aoki J."/>
            <person name="Arakawa T."/>
            <person name="Iida J."/>
            <person name="Imamura K."/>
            <person name="Itoh M."/>
            <person name="Kato T."/>
            <person name="Kawaji H."/>
            <person name="Kawagashira N."/>
            <person name="Kawashima T."/>
            <person name="Kojima M."/>
            <person name="Kondo S."/>
            <person name="Konno H."/>
            <person name="Nakano K."/>
            <person name="Ninomiya N."/>
            <person name="Nishio T."/>
            <person name="Okada M."/>
            <person name="Plessy C."/>
            <person name="Shibata K."/>
            <person name="Shiraki T."/>
            <person name="Suzuki S."/>
            <person name="Tagami M."/>
            <person name="Waki K."/>
            <person name="Watahiki A."/>
            <person name="Okamura-Oho Y."/>
            <person name="Suzuki H."/>
            <person name="Kawai J."/>
            <person name="Hayashizaki Y."/>
        </authorList>
    </citation>
    <scope>NUCLEOTIDE SEQUENCE [LARGE SCALE MRNA]</scope>
    <source>
        <strain>C57BL/6J</strain>
        <tissue>Bone marrow</tissue>
        <tissue>Placenta</tissue>
    </source>
</reference>
<reference key="3">
    <citation type="journal article" date="2009" name="PLoS Biol.">
        <title>Lineage-specific biology revealed by a finished genome assembly of the mouse.</title>
        <authorList>
            <person name="Church D.M."/>
            <person name="Goodstadt L."/>
            <person name="Hillier L.W."/>
            <person name="Zody M.C."/>
            <person name="Goldstein S."/>
            <person name="She X."/>
            <person name="Bult C.J."/>
            <person name="Agarwala R."/>
            <person name="Cherry J.L."/>
            <person name="DiCuccio M."/>
            <person name="Hlavina W."/>
            <person name="Kapustin Y."/>
            <person name="Meric P."/>
            <person name="Maglott D."/>
            <person name="Birtle Z."/>
            <person name="Marques A.C."/>
            <person name="Graves T."/>
            <person name="Zhou S."/>
            <person name="Teague B."/>
            <person name="Potamousis K."/>
            <person name="Churas C."/>
            <person name="Place M."/>
            <person name="Herschleb J."/>
            <person name="Runnheim R."/>
            <person name="Forrest D."/>
            <person name="Amos-Landgraf J."/>
            <person name="Schwartz D.C."/>
            <person name="Cheng Z."/>
            <person name="Lindblad-Toh K."/>
            <person name="Eichler E.E."/>
            <person name="Ponting C.P."/>
        </authorList>
    </citation>
    <scope>NUCLEOTIDE SEQUENCE [LARGE SCALE GENOMIC DNA]</scope>
    <source>
        <strain>C57BL/6J</strain>
    </source>
</reference>
<reference key="4">
    <citation type="journal article" date="2004" name="Genome Res.">
        <title>The status, quality, and expansion of the NIH full-length cDNA project: the Mammalian Gene Collection (MGC).</title>
        <authorList>
            <consortium name="The MGC Project Team"/>
        </authorList>
    </citation>
    <scope>NUCLEOTIDE SEQUENCE [LARGE SCALE MRNA] (ISOFORM 1)</scope>
    <source>
        <strain>Czech II</strain>
        <tissue>Mammary tumor</tissue>
    </source>
</reference>
<reference key="5">
    <citation type="journal article" date="2010" name="Cell">
        <title>A tissue-specific atlas of mouse protein phosphorylation and expression.</title>
        <authorList>
            <person name="Huttlin E.L."/>
            <person name="Jedrychowski M.P."/>
            <person name="Elias J.E."/>
            <person name="Goswami T."/>
            <person name="Rad R."/>
            <person name="Beausoleil S.A."/>
            <person name="Villen J."/>
            <person name="Haas W."/>
            <person name="Sowa M.E."/>
            <person name="Gygi S.P."/>
        </authorList>
    </citation>
    <scope>IDENTIFICATION BY MASS SPECTROMETRY [LARGE SCALE ANALYSIS]</scope>
    <source>
        <tissue>Liver</tissue>
        <tissue>Lung</tissue>
        <tissue>Spleen</tissue>
        <tissue>Testis</tissue>
    </source>
</reference>
<sequence length="509" mass="54650">MAAIGVHLGCTSACVAVYKDGRADVVANDAGDRVTPAIVAYSEREQVVGLAAKQSRIRHVSSTVVKVKQILGRSSADPQAQKYISESKCLVIEKNGKLRYEIDTGEETKLVNPEDVARLIFSKMKETAHSVLGSDANDVVVTVPFDFGEKQKSALGEAAGAAGFNVLRLIHEPSAALLAYGIGQDHPTGKSNVLVFKLGGTSLSLSVMEVNSGMYRVLSTNTSDNIGGAHFTDTLAQYLASEFQRLFKHDVRGNARAMMKLMNSAEVAKHSLSTLGSANCFVDSLYEGQDFDCNVSRARFELLCSPLFNKCTEAIRELLRQTGFTADDINKVVLCGGSSRIPKLQQLIKDLFPAVDLLNSIPPDEVIPIGAAIEAGILVGKESTSGDDSVMIECSAKDILVKGVDESGADRFTVLFPSGTPLPARRQHTLQAPGRVSSVCLELYESEGKNSAKEEAKFAQVVLQDLDKKENGLRDILAVLTMKRDGSLQVTCTDQDTGKCEAITVEVAS</sequence>
<keyword id="KW-0025">Alternative splicing</keyword>
<keyword id="KW-0067">ATP-binding</keyword>
<keyword id="KW-0143">Chaperone</keyword>
<keyword id="KW-0963">Cytoplasm</keyword>
<keyword id="KW-0547">Nucleotide-binding</keyword>
<keyword id="KW-1185">Reference proteome</keyword>
<organism>
    <name type="scientific">Mus musculus</name>
    <name type="common">Mouse</name>
    <dbReference type="NCBI Taxonomy" id="10090"/>
    <lineage>
        <taxon>Eukaryota</taxon>
        <taxon>Metazoa</taxon>
        <taxon>Chordata</taxon>
        <taxon>Craniata</taxon>
        <taxon>Vertebrata</taxon>
        <taxon>Euteleostomi</taxon>
        <taxon>Mammalia</taxon>
        <taxon>Eutheria</taxon>
        <taxon>Euarchontoglires</taxon>
        <taxon>Glires</taxon>
        <taxon>Rodentia</taxon>
        <taxon>Myomorpha</taxon>
        <taxon>Muroidea</taxon>
        <taxon>Muridae</taxon>
        <taxon>Murinae</taxon>
        <taxon>Mus</taxon>
        <taxon>Mus</taxon>
    </lineage>
</organism>
<evidence type="ECO:0000250" key="1"/>
<evidence type="ECO:0000305" key="2"/>
<gene>
    <name type="primary">Hspa14</name>
    <name type="synonym">Hsp70-4</name>
</gene>
<feature type="chain" id="PRO_0000289947" description="Heat shock 70 kDa protein 14">
    <location>
        <begin position="1"/>
        <end position="509"/>
    </location>
</feature>
<feature type="splice variant" id="VSP_026032" description="In isoform 2." evidence="2">
    <original>DGSLQVTCTDQDTGKCEAITVEVAS</original>
    <variation>YKMKCFQYYEDSLKLGPFGAWLNYHSRQILC</variation>
    <location>
        <begin position="485"/>
        <end position="509"/>
    </location>
</feature>
<feature type="sequence conflict" description="In Ref. 1; AAA17724." evidence="2" ref="1">
    <original>A</original>
    <variation>G</variation>
    <location>
        <position position="229"/>
    </location>
</feature>
<feature type="sequence conflict" description="In Ref. 3; AAH02056." evidence="2" ref="3">
    <original>Q</original>
    <variation>R</variation>
    <location>
        <position position="237"/>
    </location>
</feature>
<feature type="sequence conflict" description="In Ref. 1; AAA17724." evidence="2" ref="1">
    <original>C</original>
    <variation>WHE</variation>
    <location>
        <position position="335"/>
    </location>
</feature>
<comment type="function">
    <text evidence="1">Component of the ribosome-associated complex (RAC), a complex involved in folding or maintaining nascent polypeptides in a folding-competent state. In the RAC complex, binds to the nascent polypeptide chain, while DNAJC2 stimulates its ATPase activity (By similarity).</text>
</comment>
<comment type="subunit">
    <text evidence="1">Component of ribosome-associated complex (RAC), a heterodimer composed of Hsp70/DnaK-type chaperone HSPA14 and Hsp40/DnaJ-type chaperone DNAJC2.</text>
</comment>
<comment type="subcellular location">
    <subcellularLocation>
        <location evidence="1">Cytoplasm</location>
        <location evidence="1">Cytosol</location>
    </subcellularLocation>
</comment>
<comment type="alternative products">
    <event type="alternative splicing"/>
    <isoform>
        <id>Q99M31-1</id>
        <name>1</name>
        <sequence type="displayed"/>
    </isoform>
    <isoform>
        <id>Q99M31-2</id>
        <name>2</name>
        <sequence type="described" ref="VSP_026032"/>
    </isoform>
</comment>
<comment type="similarity">
    <text evidence="2">Belongs to the heat shock protein 70 family.</text>
</comment>